<accession>P19866</accession>
<accession>O20249</accession>
<comment type="catalytic activity">
    <reaction>
        <text>D-glyceraldehyde 3-phosphate + phosphate + NADP(+) = (2R)-3-phospho-glyceroyl phosphate + NADPH + H(+)</text>
        <dbReference type="Rhea" id="RHEA:10296"/>
        <dbReference type="ChEBI" id="CHEBI:15378"/>
        <dbReference type="ChEBI" id="CHEBI:43474"/>
        <dbReference type="ChEBI" id="CHEBI:57604"/>
        <dbReference type="ChEBI" id="CHEBI:57783"/>
        <dbReference type="ChEBI" id="CHEBI:58349"/>
        <dbReference type="ChEBI" id="CHEBI:59776"/>
        <dbReference type="EC" id="1.2.1.13"/>
    </reaction>
</comment>
<comment type="pathway">
    <text>Carbohydrate biosynthesis; Calvin cycle.</text>
</comment>
<comment type="subunit">
    <text evidence="2 3 4 5">Tetramer of either four A chains (GAPDH 2) or two A and two B chains (GAPDH 1).</text>
</comment>
<comment type="subcellular location">
    <subcellularLocation>
        <location evidence="1">Plastid</location>
        <location evidence="1">Chloroplast</location>
    </subcellularLocation>
</comment>
<comment type="miscellaneous">
    <text>Plants contain two types of GAPDH: cytosolic forms which participate in glycolysis and chloroplast forms which participate in photosynthesis. All the forms are encoded by distinct genes.</text>
</comment>
<comment type="similarity">
    <text evidence="7">Belongs to the glyceraldehyde-3-phosphate dehydrogenase family.</text>
</comment>
<feature type="transit peptide" description="Chloroplast" evidence="6">
    <location>
        <begin position="1"/>
        <end position="65"/>
    </location>
</feature>
<feature type="chain" id="PRO_0000010425" description="Glyceraldehyde-3-phosphate dehydrogenase A, chloroplastic">
    <location>
        <begin position="66"/>
        <end position="401"/>
    </location>
</feature>
<feature type="active site" description="Nucleophile">
    <location>
        <position position="218"/>
    </location>
</feature>
<feature type="binding site" evidence="2 3 4 5">
    <location>
        <begin position="76"/>
        <end position="77"/>
    </location>
    <ligand>
        <name>NADP(+)</name>
        <dbReference type="ChEBI" id="CHEBI:58349"/>
    </ligand>
</feature>
<feature type="binding site" evidence="2 3 4 5">
    <location>
        <position position="100"/>
    </location>
    <ligand>
        <name>NADP(+)</name>
        <dbReference type="ChEBI" id="CHEBI:58349"/>
    </ligand>
</feature>
<feature type="binding site" evidence="2 3 4 5">
    <location>
        <position position="145"/>
    </location>
    <ligand>
        <name>NADP(+)</name>
        <dbReference type="ChEBI" id="CHEBI:58349"/>
    </ligand>
</feature>
<feature type="binding site" evidence="1">
    <location>
        <begin position="217"/>
        <end position="219"/>
    </location>
    <ligand>
        <name>D-glyceraldehyde 3-phosphate</name>
        <dbReference type="ChEBI" id="CHEBI:59776"/>
    </ligand>
</feature>
<feature type="binding site" evidence="1">
    <location>
        <position position="248"/>
    </location>
    <ligand>
        <name>D-glyceraldehyde 3-phosphate</name>
        <dbReference type="ChEBI" id="CHEBI:59776"/>
    </ligand>
</feature>
<feature type="binding site" evidence="1">
    <location>
        <position position="263"/>
    </location>
    <ligand>
        <name>D-glyceraldehyde 3-phosphate</name>
        <dbReference type="ChEBI" id="CHEBI:59776"/>
    </ligand>
</feature>
<feature type="binding site" evidence="1">
    <location>
        <begin position="276"/>
        <end position="277"/>
    </location>
    <ligand>
        <name>D-glyceraldehyde 3-phosphate</name>
        <dbReference type="ChEBI" id="CHEBI:59776"/>
    </ligand>
</feature>
<feature type="binding site" evidence="1">
    <location>
        <position position="299"/>
    </location>
    <ligand>
        <name>D-glyceraldehyde 3-phosphate</name>
        <dbReference type="ChEBI" id="CHEBI:59776"/>
    </ligand>
</feature>
<feature type="binding site" evidence="2 3 4 5">
    <location>
        <position position="381"/>
    </location>
    <ligand>
        <name>NADP(+)</name>
        <dbReference type="ChEBI" id="CHEBI:58349"/>
    </ligand>
</feature>
<feature type="site" description="Activates thiol group during catalysis" evidence="1">
    <location>
        <position position="245"/>
    </location>
</feature>
<feature type="mutagenesis site" description="Reduced affinity for NADP, and slight increase of the affinity for NAD." evidence="4">
    <original>T</original>
    <variation>A</variation>
    <location>
        <position position="101"/>
    </location>
</feature>
<feature type="mutagenesis site" description="Reduced affinity for NADP, and slight increase of the affinity for NAD." evidence="4">
    <original>S</original>
    <variation>A</variation>
    <location>
        <position position="257"/>
    </location>
</feature>
<feature type="sequence conflict" description="In Ref. 2; AA sequence." evidence="7" ref="2">
    <original>N</original>
    <variation>Q</variation>
    <location>
        <position position="288"/>
    </location>
</feature>
<feature type="sequence conflict" description="In Ref. 2; AA sequence." evidence="7" ref="2">
    <original>Q</original>
    <variation>QA</variation>
    <location>
        <position position="401"/>
    </location>
</feature>
<feature type="strand" evidence="9">
    <location>
        <begin position="67"/>
        <end position="72"/>
    </location>
</feature>
<feature type="helix" evidence="9">
    <location>
        <begin position="76"/>
        <end position="86"/>
    </location>
</feature>
<feature type="strand" evidence="8">
    <location>
        <begin position="88"/>
        <end position="90"/>
    </location>
</feature>
<feature type="strand" evidence="9">
    <location>
        <begin position="92"/>
        <end position="99"/>
    </location>
</feature>
<feature type="helix" evidence="9">
    <location>
        <begin position="104"/>
        <end position="112"/>
    </location>
</feature>
<feature type="turn" evidence="9">
    <location>
        <begin position="115"/>
        <end position="117"/>
    </location>
</feature>
<feature type="strand" evidence="9">
    <location>
        <begin position="124"/>
        <end position="126"/>
    </location>
</feature>
<feature type="strand" evidence="9">
    <location>
        <begin position="130"/>
        <end position="134"/>
    </location>
</feature>
<feature type="strand" evidence="9">
    <location>
        <begin position="137"/>
        <end position="142"/>
    </location>
</feature>
<feature type="helix" evidence="9">
    <location>
        <begin position="147"/>
        <end position="149"/>
    </location>
</feature>
<feature type="helix" evidence="9">
    <location>
        <begin position="152"/>
        <end position="155"/>
    </location>
</feature>
<feature type="strand" evidence="9">
    <location>
        <begin position="159"/>
        <end position="162"/>
    </location>
</feature>
<feature type="strand" evidence="9">
    <location>
        <begin position="164"/>
        <end position="166"/>
    </location>
</feature>
<feature type="helix" evidence="9">
    <location>
        <begin position="170"/>
        <end position="178"/>
    </location>
</feature>
<feature type="strand" evidence="9">
    <location>
        <begin position="182"/>
        <end position="188"/>
    </location>
</feature>
<feature type="strand" evidence="9">
    <location>
        <begin position="191"/>
        <end position="193"/>
    </location>
</feature>
<feature type="turn" evidence="9">
    <location>
        <begin position="199"/>
        <end position="201"/>
    </location>
</feature>
<feature type="helix" evidence="9">
    <location>
        <begin position="203"/>
        <end position="205"/>
    </location>
</feature>
<feature type="strand" evidence="9">
    <location>
        <begin position="211"/>
        <end position="214"/>
    </location>
</feature>
<feature type="helix" evidence="9">
    <location>
        <begin position="218"/>
        <end position="234"/>
    </location>
</feature>
<feature type="strand" evidence="9">
    <location>
        <begin position="236"/>
        <end position="246"/>
    </location>
</feature>
<feature type="strand" evidence="9">
    <location>
        <begin position="253"/>
        <end position="255"/>
    </location>
</feature>
<feature type="turn" evidence="9">
    <location>
        <begin position="261"/>
        <end position="264"/>
    </location>
</feature>
<feature type="turn" evidence="9">
    <location>
        <begin position="267"/>
        <end position="269"/>
    </location>
</feature>
<feature type="strand" evidence="9">
    <location>
        <begin position="272"/>
        <end position="274"/>
    </location>
</feature>
<feature type="helix" evidence="9">
    <location>
        <begin position="278"/>
        <end position="285"/>
    </location>
</feature>
<feature type="helix" evidence="9">
    <location>
        <begin position="287"/>
        <end position="289"/>
    </location>
</feature>
<feature type="turn" evidence="9">
    <location>
        <begin position="290"/>
        <end position="292"/>
    </location>
</feature>
<feature type="strand" evidence="9">
    <location>
        <begin position="293"/>
        <end position="301"/>
    </location>
</feature>
<feature type="strand" evidence="9">
    <location>
        <begin position="306"/>
        <end position="316"/>
    </location>
</feature>
<feature type="helix" evidence="9">
    <location>
        <begin position="320"/>
        <end position="331"/>
    </location>
</feature>
<feature type="turn" evidence="9">
    <location>
        <begin position="332"/>
        <end position="338"/>
    </location>
</feature>
<feature type="strand" evidence="9">
    <location>
        <begin position="339"/>
        <end position="342"/>
    </location>
</feature>
<feature type="helix" evidence="9">
    <location>
        <begin position="348"/>
        <end position="351"/>
    </location>
</feature>
<feature type="strand" evidence="9">
    <location>
        <begin position="356"/>
        <end position="361"/>
    </location>
</feature>
<feature type="helix" evidence="9">
    <location>
        <begin position="362"/>
        <end position="364"/>
    </location>
</feature>
<feature type="strand" evidence="9">
    <location>
        <begin position="366"/>
        <end position="368"/>
    </location>
</feature>
<feature type="turn" evidence="9">
    <location>
        <begin position="369"/>
        <end position="371"/>
    </location>
</feature>
<feature type="strand" evidence="9">
    <location>
        <begin position="372"/>
        <end position="379"/>
    </location>
</feature>
<feature type="helix" evidence="9">
    <location>
        <begin position="383"/>
        <end position="398"/>
    </location>
</feature>
<reference key="1">
    <citation type="journal article" date="1996" name="Plant Mol. Biol.">
        <title>Functional studies of chloroplast glyceraldehyde-3-phosphate dehydrogenase subunits A and B expressed in Escherichia coli: formation of highly active A4 and B4 homotetramers and evidence that aggregation of the B4 complex is mediated by the B subunit carboxy terminus.</title>
        <authorList>
            <person name="Baalmann E."/>
            <person name="Scheibe R."/>
            <person name="Cerff R."/>
            <person name="Martin W."/>
        </authorList>
    </citation>
    <scope>NUCLEOTIDE SEQUENCE [MRNA]</scope>
</reference>
<reference key="2">
    <citation type="journal article" date="1990" name="Biochim. Biophys. Acta">
        <title>Chloroplast glyceraldehyde-3-phosphate dehydrogenase (NADP): amino acid sequence of the subunits from isoenzyme I and structural relationship with isoenzyme II.</title>
        <authorList>
            <person name="Ferri G."/>
            <person name="Stoppini M."/>
            <person name="Meloni M.L."/>
            <person name="Zapponi M.C."/>
            <person name="Iadarola P."/>
        </authorList>
    </citation>
    <scope>PROTEIN SEQUENCE OF 66-401</scope>
</reference>
<reference key="3">
    <citation type="journal article" date="2001" name="J. Mol. Biol.">
        <title>Crystal structure of the non-regulatory A(4) isoform of spinach chloroplast glyceraldehyde-3-phosphate dehydrogenase complexed with NADP.</title>
        <authorList>
            <person name="Fermani S."/>
            <person name="Ripamonti A."/>
            <person name="Sabatino P."/>
            <person name="Zanotti G."/>
            <person name="Scagliarini S."/>
            <person name="Sparla F."/>
            <person name="Trost P."/>
            <person name="Pupillo P."/>
        </authorList>
    </citation>
    <scope>X-RAY CRYSTALLOGRAPHY (3.00 ANGSTROMS) OF 66-401 IN COMPLEX WITH NADP</scope>
    <scope>SUBUNIT</scope>
</reference>
<reference key="4">
    <citation type="journal article" date="2003" name="Biochemistry">
        <title>Dual coenzyme specificity of photosynthetic glyceraldehyde-3-phosphate dehydrogenase interpreted by the crystal structure of A4 isoform complexed with NAD.</title>
        <authorList>
            <person name="Falini G."/>
            <person name="Fermani S."/>
            <person name="Ripamonti A."/>
            <person name="Sabatino P."/>
            <person name="Sparla F."/>
            <person name="Pupillo P."/>
            <person name="Trost P."/>
        </authorList>
    </citation>
    <scope>X-RAY CRYSTALLOGRAPHY (2.6 ANGSTROMS) OF 66-401 IN COMPLEX WITH NAD</scope>
    <scope>SUBUNIT</scope>
</reference>
<reference key="5">
    <citation type="journal article" date="2004" name="J. Mol. Biol.">
        <title>Coenzyme site-directed mutants of photosynthetic A4-GAPDH show selectively reduced NADPH-dependent catalysis, similar to regulatory AB-GAPDH inhibited by oxidized thioredoxin.</title>
        <authorList>
            <person name="Sparla F."/>
            <person name="Fermani S."/>
            <person name="Falini G."/>
            <person name="Zaffagnini M."/>
            <person name="Ripamonti A."/>
            <person name="Sabatino P."/>
            <person name="Pupillo P."/>
            <person name="Trost P."/>
        </authorList>
    </citation>
    <scope>X-RAY CRYSTALLOGRAPHY (2.2 ANGSTROMS) OF 66-401 IN COMPLEX WITH NADP</scope>
    <scope>MUTAGENESIS OF THR-101 AND SER-257</scope>
    <scope>SUBUNIT</scope>
</reference>
<reference key="6">
    <citation type="journal article" date="2006" name="Acta Crystallogr. F">
        <title>Crystallization and structural analysis of GADPH from Spinacia oleracea in a new form.</title>
        <authorList>
            <person name="Camara-Artigas A."/>
            <person name="Hirasawa M."/>
            <person name="Knaff D.B."/>
            <person name="Wang M."/>
            <person name="Allen J.P."/>
        </authorList>
    </citation>
    <scope>X-RAY CRYSTALLOGRAPHY (3.00 ANGSTROMS) OF 66-401</scope>
</reference>
<reference key="7">
    <citation type="journal article" date="2007" name="Proc. Natl. Acad. Sci. U.S.A.">
        <title>Molecular mechanism of thioredoxin regulation in photosynthetic A2B2-glyceraldehyde-3-phosphate dehydrogenase.</title>
        <authorList>
            <person name="Fermani S."/>
            <person name="Sparla F."/>
            <person name="Falini G."/>
            <person name="Martelli P.L."/>
            <person name="Casadio R."/>
            <person name="Pupillo P."/>
            <person name="Ripamonti A."/>
            <person name="Trost P."/>
        </authorList>
    </citation>
    <scope>X-RAY CRYSTALLOGRAPHY (2.40 ANGSTROMS) OF 66-401 IN COMPLEX WITH NADP</scope>
    <scope>SUBUNIT</scope>
</reference>
<evidence type="ECO:0000250" key="1"/>
<evidence type="ECO:0000269" key="2">
    <source>
    </source>
</evidence>
<evidence type="ECO:0000269" key="3">
    <source>
    </source>
</evidence>
<evidence type="ECO:0000269" key="4">
    <source>
    </source>
</evidence>
<evidence type="ECO:0000269" key="5">
    <source>
    </source>
</evidence>
<evidence type="ECO:0000269" key="6">
    <source>
    </source>
</evidence>
<evidence type="ECO:0000305" key="7"/>
<evidence type="ECO:0007829" key="8">
    <source>
        <dbReference type="PDB" id="1RM3"/>
    </source>
</evidence>
<evidence type="ECO:0007829" key="9">
    <source>
        <dbReference type="PDB" id="1RM4"/>
    </source>
</evidence>
<organism>
    <name type="scientific">Spinacia oleracea</name>
    <name type="common">Spinach</name>
    <dbReference type="NCBI Taxonomy" id="3562"/>
    <lineage>
        <taxon>Eukaryota</taxon>
        <taxon>Viridiplantae</taxon>
        <taxon>Streptophyta</taxon>
        <taxon>Embryophyta</taxon>
        <taxon>Tracheophyta</taxon>
        <taxon>Spermatophyta</taxon>
        <taxon>Magnoliopsida</taxon>
        <taxon>eudicotyledons</taxon>
        <taxon>Gunneridae</taxon>
        <taxon>Pentapetalae</taxon>
        <taxon>Caryophyllales</taxon>
        <taxon>Chenopodiaceae</taxon>
        <taxon>Chenopodioideae</taxon>
        <taxon>Anserineae</taxon>
        <taxon>Spinacia</taxon>
    </lineage>
</organism>
<gene>
    <name type="primary">GAPA</name>
    <name type="synonym">GPA1</name>
</gene>
<sequence>MASNMLSIANPSLRVYNKGFSEFSGLHTSSLPFGRKGSDDLMAFVSFQTNAVGGKRSSQNGVVEAKLKVAINGFGRIGRNFLRCWHGRKDSPLDVVVINDTGGVKQASHLLKYDSILGTFDADVKTAGDSAISVDGKVIKVVSDRNPVNLPWGDMGIDLVIEGTGVFVDRDGAGKHLQAGAKKVLITAPGKGDIPTYVVGVNEEGYTHADTIISNASCTTNCLAPFVKVLDQKFGIIKGTMTTTHSYTGDQRLLDASHRDLRRARAACLNIVPTSTGAAKAVALVLPNLKGKLNGIALRVPTPNVSVVDLVVQVSKKTFAEEVNAAFRESADNELKGILSVCDEPLVSIDFRCTDVSSTIDSSLTMVMGDDMVKVIAWYDNEWGYSQRVVDLADIVANKWQ</sequence>
<proteinExistence type="evidence at protein level"/>
<keyword id="KW-0002">3D-structure</keyword>
<keyword id="KW-0113">Calvin cycle</keyword>
<keyword id="KW-0150">Chloroplast</keyword>
<keyword id="KW-0903">Direct protein sequencing</keyword>
<keyword id="KW-0521">NADP</keyword>
<keyword id="KW-0560">Oxidoreductase</keyword>
<keyword id="KW-0934">Plastid</keyword>
<keyword id="KW-1185">Reference proteome</keyword>
<keyword id="KW-0809">Transit peptide</keyword>
<dbReference type="EC" id="1.2.1.13"/>
<dbReference type="EMBL" id="L76552">
    <property type="protein sequence ID" value="AAD10217.1"/>
    <property type="molecule type" value="mRNA"/>
</dbReference>
<dbReference type="PIR" id="T09012">
    <property type="entry name" value="T09012"/>
</dbReference>
<dbReference type="PDB" id="1JN0">
    <property type="method" value="X-ray"/>
    <property type="resolution" value="3.00 A"/>
    <property type="chains" value="A/B/O=66-401"/>
</dbReference>
<dbReference type="PDB" id="1NBO">
    <property type="method" value="X-ray"/>
    <property type="resolution" value="2.60 A"/>
    <property type="chains" value="A/B/O=66-401"/>
</dbReference>
<dbReference type="PDB" id="1RM3">
    <property type="method" value="X-ray"/>
    <property type="resolution" value="2.20 A"/>
    <property type="chains" value="A/B/O=66-401"/>
</dbReference>
<dbReference type="PDB" id="1RM4">
    <property type="method" value="X-ray"/>
    <property type="resolution" value="2.00 A"/>
    <property type="chains" value="A/B/O=66-401"/>
</dbReference>
<dbReference type="PDB" id="1RM5">
    <property type="method" value="X-ray"/>
    <property type="resolution" value="2.10 A"/>
    <property type="chains" value="A/B/O=66-401"/>
</dbReference>
<dbReference type="PDB" id="2HKI">
    <property type="method" value="X-ray"/>
    <property type="resolution" value="3.00 A"/>
    <property type="chains" value="A=66-401"/>
</dbReference>
<dbReference type="PDB" id="2PKQ">
    <property type="method" value="X-ray"/>
    <property type="resolution" value="3.60 A"/>
    <property type="chains" value="P/R/S=66-401"/>
</dbReference>
<dbReference type="PDB" id="2PKR">
    <property type="method" value="X-ray"/>
    <property type="resolution" value="2.40 A"/>
    <property type="chains" value="A/B/C/D/H/I/L/M/O/P/Q/R=66-401"/>
</dbReference>
<dbReference type="PDB" id="7Q53">
    <property type="method" value="EM"/>
    <property type="resolution" value="6.30 A"/>
    <property type="chains" value="P/R=66-401"/>
</dbReference>
<dbReference type="PDB" id="7Q54">
    <property type="method" value="EM"/>
    <property type="resolution" value="8.90 A"/>
    <property type="chains" value="B/D/P/R=1-401"/>
</dbReference>
<dbReference type="PDB" id="7Q55">
    <property type="method" value="EM"/>
    <property type="resolution" value="5.70 A"/>
    <property type="chains" value="B/D/F/H/J/L/P/R=1-401"/>
</dbReference>
<dbReference type="PDB" id="7Q56">
    <property type="method" value="EM"/>
    <property type="resolution" value="7.10 A"/>
    <property type="chains" value="B/D/F/H/J/L/P/R=66-401"/>
</dbReference>
<dbReference type="PDB" id="7Q57">
    <property type="method" value="EM"/>
    <property type="resolution" value="13.00 A"/>
    <property type="chains" value="B/D/F/H/J/L/N/P/R/T=66-401"/>
</dbReference>
<dbReference type="PDBsum" id="1JN0"/>
<dbReference type="PDBsum" id="1NBO"/>
<dbReference type="PDBsum" id="1RM3"/>
<dbReference type="PDBsum" id="1RM4"/>
<dbReference type="PDBsum" id="1RM5"/>
<dbReference type="PDBsum" id="2HKI"/>
<dbReference type="PDBsum" id="2PKQ"/>
<dbReference type="PDBsum" id="2PKR"/>
<dbReference type="PDBsum" id="7Q53"/>
<dbReference type="PDBsum" id="7Q54"/>
<dbReference type="PDBsum" id="7Q55"/>
<dbReference type="PDBsum" id="7Q56"/>
<dbReference type="PDBsum" id="7Q57"/>
<dbReference type="EMDB" id="EMD-13824"/>
<dbReference type="EMDB" id="EMD-13825"/>
<dbReference type="EMDB" id="EMD-13826"/>
<dbReference type="EMDB" id="EMD-13827"/>
<dbReference type="EMDB" id="EMD-13828"/>
<dbReference type="SMR" id="P19866"/>
<dbReference type="DIP" id="DIP-60959N"/>
<dbReference type="IntAct" id="P19866">
    <property type="interactions" value="1"/>
</dbReference>
<dbReference type="OrthoDB" id="1152826at2759"/>
<dbReference type="BRENDA" id="1.2.1.12">
    <property type="organism ID" value="5812"/>
</dbReference>
<dbReference type="BRENDA" id="1.2.1.13">
    <property type="organism ID" value="5812"/>
</dbReference>
<dbReference type="SABIO-RK" id="P19866"/>
<dbReference type="UniPathway" id="UPA00116"/>
<dbReference type="EvolutionaryTrace" id="P19866"/>
<dbReference type="Proteomes" id="UP001155700">
    <property type="component" value="Unplaced"/>
</dbReference>
<dbReference type="GO" id="GO:0009507">
    <property type="term" value="C:chloroplast"/>
    <property type="evidence" value="ECO:0007669"/>
    <property type="project" value="UniProtKB-SubCell"/>
</dbReference>
<dbReference type="GO" id="GO:0004365">
    <property type="term" value="F:glyceraldehyde-3-phosphate dehydrogenase (NAD+) (phosphorylating) activity"/>
    <property type="evidence" value="ECO:0000318"/>
    <property type="project" value="GO_Central"/>
</dbReference>
<dbReference type="GO" id="GO:0047100">
    <property type="term" value="F:glyceraldehyde-3-phosphate dehydrogenase (NADP+) (phosphorylating) activity"/>
    <property type="evidence" value="ECO:0007669"/>
    <property type="project" value="UniProtKB-EC"/>
</dbReference>
<dbReference type="GO" id="GO:0051287">
    <property type="term" value="F:NAD binding"/>
    <property type="evidence" value="ECO:0000318"/>
    <property type="project" value="GO_Central"/>
</dbReference>
<dbReference type="GO" id="GO:0050661">
    <property type="term" value="F:NADP binding"/>
    <property type="evidence" value="ECO:0007669"/>
    <property type="project" value="InterPro"/>
</dbReference>
<dbReference type="GO" id="GO:0006006">
    <property type="term" value="P:glucose metabolic process"/>
    <property type="evidence" value="ECO:0000318"/>
    <property type="project" value="GO_Central"/>
</dbReference>
<dbReference type="GO" id="GO:0019253">
    <property type="term" value="P:reductive pentose-phosphate cycle"/>
    <property type="evidence" value="ECO:0007669"/>
    <property type="project" value="UniProtKB-UniPathway"/>
</dbReference>
<dbReference type="CDD" id="cd18126">
    <property type="entry name" value="GAPDH_I_C"/>
    <property type="match status" value="1"/>
</dbReference>
<dbReference type="CDD" id="cd05214">
    <property type="entry name" value="GAPDH_I_N"/>
    <property type="match status" value="1"/>
</dbReference>
<dbReference type="FunFam" id="3.30.360.10:FF:000002">
    <property type="entry name" value="Glyceraldehyde-3-phosphate dehydrogenase"/>
    <property type="match status" value="1"/>
</dbReference>
<dbReference type="FunFam" id="3.40.50.720:FF:000001">
    <property type="entry name" value="Glyceraldehyde-3-phosphate dehydrogenase"/>
    <property type="match status" value="1"/>
</dbReference>
<dbReference type="Gene3D" id="3.30.360.10">
    <property type="entry name" value="Dihydrodipicolinate Reductase, domain 2"/>
    <property type="match status" value="1"/>
</dbReference>
<dbReference type="Gene3D" id="3.40.50.720">
    <property type="entry name" value="NAD(P)-binding Rossmann-like Domain"/>
    <property type="match status" value="1"/>
</dbReference>
<dbReference type="InterPro" id="IPR020831">
    <property type="entry name" value="GlycerAld/Erythrose_P_DH"/>
</dbReference>
<dbReference type="InterPro" id="IPR020830">
    <property type="entry name" value="GlycerAld_3-P_DH_AS"/>
</dbReference>
<dbReference type="InterPro" id="IPR020829">
    <property type="entry name" value="GlycerAld_3-P_DH_cat"/>
</dbReference>
<dbReference type="InterPro" id="IPR020828">
    <property type="entry name" value="GlycerAld_3-P_DH_NAD(P)-bd"/>
</dbReference>
<dbReference type="InterPro" id="IPR006424">
    <property type="entry name" value="Glyceraldehyde-3-P_DH_1"/>
</dbReference>
<dbReference type="InterPro" id="IPR036291">
    <property type="entry name" value="NAD(P)-bd_dom_sf"/>
</dbReference>
<dbReference type="NCBIfam" id="TIGR01534">
    <property type="entry name" value="GAPDH-I"/>
    <property type="match status" value="1"/>
</dbReference>
<dbReference type="PANTHER" id="PTHR43148">
    <property type="entry name" value="GLYCERALDEHYDE-3-PHOSPHATE DEHYDROGENASE 2"/>
    <property type="match status" value="1"/>
</dbReference>
<dbReference type="Pfam" id="PF02800">
    <property type="entry name" value="Gp_dh_C"/>
    <property type="match status" value="1"/>
</dbReference>
<dbReference type="Pfam" id="PF00044">
    <property type="entry name" value="Gp_dh_N"/>
    <property type="match status" value="1"/>
</dbReference>
<dbReference type="PIRSF" id="PIRSF000149">
    <property type="entry name" value="GAP_DH"/>
    <property type="match status" value="1"/>
</dbReference>
<dbReference type="PRINTS" id="PR00078">
    <property type="entry name" value="G3PDHDRGNASE"/>
</dbReference>
<dbReference type="SMART" id="SM00846">
    <property type="entry name" value="Gp_dh_N"/>
    <property type="match status" value="1"/>
</dbReference>
<dbReference type="SUPFAM" id="SSF55347">
    <property type="entry name" value="Glyceraldehyde-3-phosphate dehydrogenase-like, C-terminal domain"/>
    <property type="match status" value="1"/>
</dbReference>
<dbReference type="SUPFAM" id="SSF51735">
    <property type="entry name" value="NAD(P)-binding Rossmann-fold domains"/>
    <property type="match status" value="1"/>
</dbReference>
<dbReference type="PROSITE" id="PS00071">
    <property type="entry name" value="GAPDH"/>
    <property type="match status" value="1"/>
</dbReference>
<protein>
    <recommendedName>
        <fullName>Glyceraldehyde-3-phosphate dehydrogenase A, chloroplastic</fullName>
        <ecNumber>1.2.1.13</ecNumber>
    </recommendedName>
    <alternativeName>
        <fullName>NADP-dependent glyceraldehydephosphate dehydrogenase subunit A</fullName>
    </alternativeName>
</protein>
<name>G3PA_SPIOL</name>